<keyword id="KW-0249">Electron transport</keyword>
<keyword id="KW-0472">Membrane</keyword>
<keyword id="KW-0496">Mitochondrion</keyword>
<keyword id="KW-0999">Mitochondrion inner membrane</keyword>
<keyword id="KW-0520">NAD</keyword>
<keyword id="KW-0679">Respiratory chain</keyword>
<keyword id="KW-1278">Translocase</keyword>
<keyword id="KW-0812">Transmembrane</keyword>
<keyword id="KW-1133">Transmembrane helix</keyword>
<keyword id="KW-0813">Transport</keyword>
<keyword id="KW-0830">Ubiquinone</keyword>
<geneLocation type="mitochondrion"/>
<comment type="function">
    <text evidence="1">Core subunit of the mitochondrial membrane respiratory chain NADH dehydrogenase (Complex I) which catalyzes electron transfer from NADH through the respiratory chain, using ubiquinone as an electron acceptor. Essential for the catalytic activity and assembly of complex I.</text>
</comment>
<comment type="catalytic activity">
    <reaction evidence="1">
        <text>a ubiquinone + NADH + 5 H(+)(in) = a ubiquinol + NAD(+) + 4 H(+)(out)</text>
        <dbReference type="Rhea" id="RHEA:29091"/>
        <dbReference type="Rhea" id="RHEA-COMP:9565"/>
        <dbReference type="Rhea" id="RHEA-COMP:9566"/>
        <dbReference type="ChEBI" id="CHEBI:15378"/>
        <dbReference type="ChEBI" id="CHEBI:16389"/>
        <dbReference type="ChEBI" id="CHEBI:17976"/>
        <dbReference type="ChEBI" id="CHEBI:57540"/>
        <dbReference type="ChEBI" id="CHEBI:57945"/>
        <dbReference type="EC" id="7.1.1.2"/>
    </reaction>
</comment>
<comment type="subunit">
    <text evidence="1 2">Core subunit of respiratory chain NADH dehydrogenase (Complex I) which is composed of 45 different subunits. Interacts with TMEM242 (By similarity).</text>
</comment>
<comment type="subcellular location">
    <subcellularLocation>
        <location evidence="2">Mitochondrion inner membrane</location>
        <topology evidence="3">Multi-pass membrane protein</topology>
    </subcellularLocation>
</comment>
<comment type="similarity">
    <text evidence="4">Belongs to the complex I subunit 2 family.</text>
</comment>
<evidence type="ECO:0000250" key="1">
    <source>
        <dbReference type="UniProtKB" id="P03891"/>
    </source>
</evidence>
<evidence type="ECO:0000250" key="2">
    <source>
        <dbReference type="UniProtKB" id="P03892"/>
    </source>
</evidence>
<evidence type="ECO:0000255" key="3"/>
<evidence type="ECO:0000305" key="4"/>
<feature type="chain" id="PRO_0000117635" description="NADH-ubiquinone oxidoreductase chain 2">
    <location>
        <begin position="1"/>
        <end position="347"/>
    </location>
</feature>
<feature type="transmembrane region" description="Helical" evidence="3">
    <location>
        <begin position="3"/>
        <end position="23"/>
    </location>
</feature>
<feature type="transmembrane region" description="Helical" evidence="3">
    <location>
        <begin position="25"/>
        <end position="45"/>
    </location>
</feature>
<feature type="transmembrane region" description="Helical" evidence="3">
    <location>
        <begin position="59"/>
        <end position="79"/>
    </location>
</feature>
<feature type="transmembrane region" description="Helical" evidence="3">
    <location>
        <begin position="111"/>
        <end position="131"/>
    </location>
</feature>
<feature type="transmembrane region" description="Helical" evidence="3">
    <location>
        <begin position="149"/>
        <end position="169"/>
    </location>
</feature>
<feature type="transmembrane region" description="Helical" evidence="3">
    <location>
        <begin position="178"/>
        <end position="198"/>
    </location>
</feature>
<feature type="transmembrane region" description="Helical" evidence="3">
    <location>
        <begin position="201"/>
        <end position="221"/>
    </location>
</feature>
<feature type="transmembrane region" description="Helical" evidence="3">
    <location>
        <begin position="242"/>
        <end position="262"/>
    </location>
</feature>
<feature type="transmembrane region" description="Helical" evidence="3">
    <location>
        <begin position="274"/>
        <end position="294"/>
    </location>
</feature>
<feature type="transmembrane region" description="Helical" evidence="3">
    <location>
        <begin position="325"/>
        <end position="345"/>
    </location>
</feature>
<organism>
    <name type="scientific">Rhinoceros unicornis</name>
    <name type="common">Greater Indian rhinoceros</name>
    <dbReference type="NCBI Taxonomy" id="9809"/>
    <lineage>
        <taxon>Eukaryota</taxon>
        <taxon>Metazoa</taxon>
        <taxon>Chordata</taxon>
        <taxon>Craniata</taxon>
        <taxon>Vertebrata</taxon>
        <taxon>Euteleostomi</taxon>
        <taxon>Mammalia</taxon>
        <taxon>Eutheria</taxon>
        <taxon>Laurasiatheria</taxon>
        <taxon>Perissodactyla</taxon>
        <taxon>Rhinocerotidae</taxon>
        <taxon>Rhinoceros</taxon>
    </lineage>
</organism>
<dbReference type="EC" id="7.1.1.2" evidence="1"/>
<dbReference type="EMBL" id="X97336">
    <property type="protein sequence ID" value="CAA66002.1"/>
    <property type="molecule type" value="Genomic_DNA"/>
</dbReference>
<dbReference type="PIR" id="T11248">
    <property type="entry name" value="T11248"/>
</dbReference>
<dbReference type="RefSeq" id="NP_007369.1">
    <property type="nucleotide sequence ID" value="NC_001779.1"/>
</dbReference>
<dbReference type="SMR" id="Q96061"/>
<dbReference type="GeneID" id="808042"/>
<dbReference type="CTD" id="4536"/>
<dbReference type="GO" id="GO:0005743">
    <property type="term" value="C:mitochondrial inner membrane"/>
    <property type="evidence" value="ECO:0000250"/>
    <property type="project" value="UniProtKB"/>
</dbReference>
<dbReference type="GO" id="GO:0008137">
    <property type="term" value="F:NADH dehydrogenase (ubiquinone) activity"/>
    <property type="evidence" value="ECO:0000250"/>
    <property type="project" value="UniProtKB"/>
</dbReference>
<dbReference type="GO" id="GO:0006120">
    <property type="term" value="P:mitochondrial electron transport, NADH to ubiquinone"/>
    <property type="evidence" value="ECO:0000250"/>
    <property type="project" value="UniProtKB"/>
</dbReference>
<dbReference type="GO" id="GO:0032981">
    <property type="term" value="P:mitochondrial respiratory chain complex I assembly"/>
    <property type="evidence" value="ECO:0000250"/>
    <property type="project" value="UniProtKB"/>
</dbReference>
<dbReference type="InterPro" id="IPR050175">
    <property type="entry name" value="Complex_I_Subunit_2"/>
</dbReference>
<dbReference type="InterPro" id="IPR010933">
    <property type="entry name" value="NADH_DH_su2_C"/>
</dbReference>
<dbReference type="InterPro" id="IPR003917">
    <property type="entry name" value="NADH_UbQ_OxRdtase_chain2"/>
</dbReference>
<dbReference type="InterPro" id="IPR001750">
    <property type="entry name" value="ND/Mrp_TM"/>
</dbReference>
<dbReference type="PANTHER" id="PTHR46552">
    <property type="entry name" value="NADH-UBIQUINONE OXIDOREDUCTASE CHAIN 2"/>
    <property type="match status" value="1"/>
</dbReference>
<dbReference type="PANTHER" id="PTHR46552:SF1">
    <property type="entry name" value="NADH-UBIQUINONE OXIDOREDUCTASE CHAIN 2"/>
    <property type="match status" value="1"/>
</dbReference>
<dbReference type="Pfam" id="PF06444">
    <property type="entry name" value="NADH_dehy_S2_C"/>
    <property type="match status" value="1"/>
</dbReference>
<dbReference type="Pfam" id="PF00361">
    <property type="entry name" value="Proton_antipo_M"/>
    <property type="match status" value="1"/>
</dbReference>
<dbReference type="PRINTS" id="PR01436">
    <property type="entry name" value="NADHDHGNASE2"/>
</dbReference>
<name>NU2M_RHIUN</name>
<proteinExistence type="inferred from homology"/>
<gene>
    <name evidence="1" type="primary">MT-ND2</name>
    <name type="synonym">MTND2</name>
    <name type="synonym">NADH2</name>
    <name type="synonym">ND2</name>
</gene>
<protein>
    <recommendedName>
        <fullName evidence="1">NADH-ubiquinone oxidoreductase chain 2</fullName>
        <ecNumber evidence="1">7.1.1.2</ecNumber>
    </recommendedName>
    <alternativeName>
        <fullName>NADH dehydrogenase subunit 2</fullName>
    </alternativeName>
</protein>
<sequence>MNPIVFSTILTTAIMGTVIVMMSSHWLMVWIGFEMNLLAIIPILMKKFNPRAMEASTKYFLTQATASMLLMSAIIINLMHSGQWTITKMFNPTASAIMTSALIMKLGLSPFHFWVPEVTQGISLMSGLILLTWQKLAPMSILYQIAPSINLDMLMTSALLSILVGGWGGLNQTQLRKIMAYSSIAHMGWMTAILTYNPTMTMLNMLIYIMMTLTTFMLLMLNSSTTTLSLSHTWNKTPLITSLILIIMLSLGGLPPLSGFIPKWMIIQELTKNNSIILPTSMAIMALLNLYFYLRLTYSTSLTMFPSTNNMKMKWQFENSKQMSLLPTLIIMSTLLLPLMPTMSILN</sequence>
<reference key="1">
    <citation type="journal article" date="1996" name="Mol. Biol. Evol.">
        <title>The complete mitochondrial DNA sequence of the greater Indian rhinoceros, Rhinoceros unicornis, and the Phylogenetic relationship among Carnivora, Perissodactyla, and Artiodactyla (+ Cetacea).</title>
        <authorList>
            <person name="Xu X."/>
            <person name="Janke A."/>
            <person name="Arnason U."/>
        </authorList>
    </citation>
    <scope>NUCLEOTIDE SEQUENCE [GENOMIC DNA]</scope>
    <source>
        <tissue>Kidney</tissue>
    </source>
</reference>
<accession>Q96061</accession>